<proteinExistence type="evidence at protein level"/>
<keyword id="KW-0024">Alternative initiation</keyword>
<keyword id="KW-1015">Disulfide bond</keyword>
<keyword id="KW-1048">Host nucleus</keyword>
<keyword id="KW-0945">Host-virus interaction</keyword>
<keyword id="KW-0677">Repeat</keyword>
<keyword id="KW-0964">Secreted</keyword>
<keyword id="KW-0732">Signal</keyword>
<keyword id="KW-0899">Viral immunoevasion</keyword>
<evidence type="ECO:0000250" key="1"/>
<evidence type="ECO:0000255" key="2">
    <source>
        <dbReference type="HAMAP-Rule" id="MF_04076"/>
    </source>
</evidence>
<evidence type="ECO:0000256" key="3">
    <source>
        <dbReference type="SAM" id="MobiDB-lite"/>
    </source>
</evidence>
<evidence type="ECO:0000269" key="4">
    <source>
    </source>
</evidence>
<evidence type="ECO:0000269" key="5">
    <source>
    </source>
</evidence>
<protein>
    <recommendedName>
        <fullName evidence="2">External core antigen</fullName>
    </recommendedName>
    <alternativeName>
        <fullName evidence="2">HBeAg</fullName>
    </alternativeName>
    <alternativeName>
        <fullName evidence="2">Precore protein</fullName>
    </alternativeName>
    <alternativeName>
        <fullName evidence="2">p25</fullName>
    </alternativeName>
</protein>
<feature type="signal peptide" evidence="2">
    <location>
        <begin position="1"/>
        <end position="19"/>
    </location>
</feature>
<feature type="chain" id="PRO_0000315013" description="External core antigen" evidence="2">
    <location>
        <begin position="20"/>
        <end position="214"/>
    </location>
</feature>
<feature type="propeptide" id="PRO_0000314869" evidence="1">
    <location>
        <begin position="186"/>
        <end position="214"/>
    </location>
</feature>
<feature type="repeat" description="1; half-length">
    <location>
        <begin position="186"/>
        <end position="192"/>
    </location>
</feature>
<feature type="repeat" description="2">
    <location>
        <begin position="193"/>
        <end position="200"/>
    </location>
</feature>
<feature type="repeat" description="3">
    <location>
        <begin position="201"/>
        <end position="208"/>
    </location>
</feature>
<feature type="region of interest" description="HBEAG" evidence="2">
    <location>
        <begin position="25"/>
        <end position="27"/>
    </location>
</feature>
<feature type="region of interest" description="Disordered" evidence="3">
    <location>
        <begin position="165"/>
        <end position="214"/>
    </location>
</feature>
<feature type="region of interest" description="3 X 8 AA repeats of S-P-R-R-R-R-S-[PQ]">
    <location>
        <begin position="186"/>
        <end position="208"/>
    </location>
</feature>
<feature type="compositionally biased region" description="Basic residues" evidence="3">
    <location>
        <begin position="178"/>
        <end position="207"/>
    </location>
</feature>
<feature type="site" description="Cleavage; by host" evidence="2">
    <location>
        <begin position="185"/>
        <end position="186"/>
    </location>
</feature>
<feature type="disulfide bond" description="Interchain" evidence="2">
    <location>
        <position position="77"/>
    </location>
</feature>
<feature type="disulfide bond" description="Interchain" evidence="2">
    <location>
        <position position="90"/>
    </location>
</feature>
<feature type="sequence variant">
    <original>V</original>
    <variation>M</variation>
    <location>
        <position position="122"/>
    </location>
</feature>
<feature type="sequence variant" description="Frequent mutation in chronic HBV carriers." evidence="4">
    <original>I</original>
    <variation>L</variation>
    <location>
        <position position="126"/>
    </location>
</feature>
<feature type="sequence variant">
    <original>R</original>
    <variation>P</variation>
    <location>
        <position position="198"/>
    </location>
</feature>
<name>HBEAG_HBVA3</name>
<organism>
    <name type="scientific">Hepatitis B virus genotype A2 subtype adw2 (strain Rutter 1979)</name>
    <name type="common">HBV-A</name>
    <dbReference type="NCBI Taxonomy" id="480116"/>
    <lineage>
        <taxon>Viruses</taxon>
        <taxon>Riboviria</taxon>
        <taxon>Pararnavirae</taxon>
        <taxon>Artverviricota</taxon>
        <taxon>Revtraviricetes</taxon>
        <taxon>Blubervirales</taxon>
        <taxon>Hepadnaviridae</taxon>
        <taxon>Orthohepadnavirus</taxon>
        <taxon>Hepatitis B virus</taxon>
    </lineage>
</organism>
<gene>
    <name evidence="2" type="primary">C</name>
</gene>
<comment type="function">
    <text evidence="2">May regulate immune response to the intracellular capsid in acting as a T-cell tolerogen, by having an immunoregulatory effect which prevents destruction of infected cells by cytotoxic T-cells. This immune regulation may predispose to chronicity during perinatal infections and prevent severe liver injury during adult infections.</text>
</comment>
<comment type="subunit">
    <text evidence="2">Homodimerizes.</text>
</comment>
<comment type="subcellular location">
    <subcellularLocation>
        <location evidence="2 5">Secreted</location>
    </subcellularLocation>
    <subcellularLocation>
        <location evidence="2 5">Host nucleus</location>
    </subcellularLocation>
</comment>
<comment type="alternative products">
    <event type="alternative initiation"/>
    <isoform>
        <id>P0C625-1</id>
        <name>External core antigen</name>
        <sequence type="displayed"/>
    </isoform>
    <isoform>
        <id>P03148-1</id>
        <name>Capsid protein</name>
        <sequence type="external"/>
    </isoform>
</comment>
<comment type="PTM">
    <text evidence="2">Phosphorylated.</text>
</comment>
<comment type="PTM">
    <text evidence="2">Cleaved by host furin.</text>
</comment>
<comment type="similarity">
    <text evidence="2">Belongs to the orthohepadnavirus precore antigen family.</text>
</comment>
<organismHost>
    <name type="scientific">Homo sapiens</name>
    <name type="common">Human</name>
    <dbReference type="NCBI Taxonomy" id="9606"/>
</organismHost>
<organismHost>
    <name type="scientific">Pan troglodytes</name>
    <name type="common">Chimpanzee</name>
    <dbReference type="NCBI Taxonomy" id="9598"/>
</organismHost>
<accession>P0C625</accession>
<sequence length="214" mass="24580">MQLFHLCLIISCTCPTVQASKLCLGWLWGMDIDPYKEFGATVELLSFLPSDFFPSVRDLLDTASALYREALESPEHCSPHHTALRQAILCWGELMTLATWVGNNLEDPASRDLVVNYVNTNVGLKIRQLLWFHISCLTFGRETVLEYLVSFGVWIRTPPAYRPPNAPILSTLPETTVVRRRDRGRSPRRRTPSPRRRRSPSPRRRRSQSRESQC</sequence>
<dbReference type="EMBL" id="X02763">
    <property type="status" value="NOT_ANNOTATED_CDS"/>
    <property type="molecule type" value="Genomic_DNA"/>
</dbReference>
<dbReference type="SMR" id="P0C625"/>
<dbReference type="Proteomes" id="UP000008766">
    <property type="component" value="Segment"/>
</dbReference>
<dbReference type="GO" id="GO:0005576">
    <property type="term" value="C:extracellular region"/>
    <property type="evidence" value="ECO:0007669"/>
    <property type="project" value="UniProtKB-SubCell"/>
</dbReference>
<dbReference type="GO" id="GO:0043657">
    <property type="term" value="C:host cell"/>
    <property type="evidence" value="ECO:0007669"/>
    <property type="project" value="GOC"/>
</dbReference>
<dbReference type="GO" id="GO:0030430">
    <property type="term" value="C:host cell cytoplasm"/>
    <property type="evidence" value="ECO:0007669"/>
    <property type="project" value="UniProtKB-UniRule"/>
</dbReference>
<dbReference type="GO" id="GO:0042025">
    <property type="term" value="C:host cell nucleus"/>
    <property type="evidence" value="ECO:0007669"/>
    <property type="project" value="UniProtKB-SubCell"/>
</dbReference>
<dbReference type="GO" id="GO:0039619">
    <property type="term" value="C:T=4 icosahedral viral capsid"/>
    <property type="evidence" value="ECO:0007669"/>
    <property type="project" value="UniProtKB-UniRule"/>
</dbReference>
<dbReference type="GO" id="GO:0003677">
    <property type="term" value="F:DNA binding"/>
    <property type="evidence" value="ECO:0007669"/>
    <property type="project" value="UniProtKB-UniRule"/>
</dbReference>
<dbReference type="GO" id="GO:0003723">
    <property type="term" value="F:RNA binding"/>
    <property type="evidence" value="ECO:0007669"/>
    <property type="project" value="UniProtKB-UniRule"/>
</dbReference>
<dbReference type="GO" id="GO:0005198">
    <property type="term" value="F:structural molecule activity"/>
    <property type="evidence" value="ECO:0007669"/>
    <property type="project" value="UniProtKB-UniRule"/>
</dbReference>
<dbReference type="GO" id="GO:0075521">
    <property type="term" value="P:microtubule-dependent intracellular transport of viral material towards nucleus"/>
    <property type="evidence" value="ECO:0007669"/>
    <property type="project" value="UniProtKB-UniRule"/>
</dbReference>
<dbReference type="GO" id="GO:0046718">
    <property type="term" value="P:symbiont entry into host cell"/>
    <property type="evidence" value="ECO:0007669"/>
    <property type="project" value="UniProtKB-UniRule"/>
</dbReference>
<dbReference type="GO" id="GO:0075732">
    <property type="term" value="P:viral penetration into host nucleus"/>
    <property type="evidence" value="ECO:0007669"/>
    <property type="project" value="UniProtKB-UniRule"/>
</dbReference>
<dbReference type="FunFam" id="1.10.4090.10:FF:000001">
    <property type="entry name" value="Capsid protein"/>
    <property type="match status" value="1"/>
</dbReference>
<dbReference type="Gene3D" id="1.10.4090.10">
    <property type="entry name" value="Viral capsid, core domain supefamily, Hepatitis B virus"/>
    <property type="match status" value="1"/>
</dbReference>
<dbReference type="HAMAP" id="MF_04076">
    <property type="entry name" value="HBV_HBEAG"/>
    <property type="match status" value="1"/>
</dbReference>
<dbReference type="InterPro" id="IPR013195">
    <property type="entry name" value="Hepatitis_B_virus_capsid_N"/>
</dbReference>
<dbReference type="InterPro" id="IPR002006">
    <property type="entry name" value="Hepatitis_core"/>
</dbReference>
<dbReference type="InterPro" id="IPR036459">
    <property type="entry name" value="Viral_capsid_core_dom_sf_HBV"/>
</dbReference>
<dbReference type="Pfam" id="PF08290">
    <property type="entry name" value="Hep_core_N"/>
    <property type="match status" value="1"/>
</dbReference>
<dbReference type="Pfam" id="PF00906">
    <property type="entry name" value="Hepatitis_core"/>
    <property type="match status" value="2"/>
</dbReference>
<dbReference type="SUPFAM" id="SSF47852">
    <property type="entry name" value="Hepatitis B viral capsid (hbcag)"/>
    <property type="match status" value="1"/>
</dbReference>
<reference key="1">
    <citation type="book" date="1980" name="Animal virus genetics">
        <title>The nucleotide sequence of the hepatitis B viral genome and the identification of the major viral genes.</title>
        <editorList>
            <person name="Field B.N."/>
            <person name="Jaenisch R."/>
            <person name="Fox C.F."/>
        </editorList>
        <authorList>
            <person name="Valenzuela P."/>
            <person name="Quiroga M."/>
            <person name="Zaldivar J."/>
            <person name="Gray P."/>
            <person name="Rutter W.J."/>
        </authorList>
    </citation>
    <scope>NUCLEOTIDE SEQUENCE [GENOMIC DNA]</scope>
</reference>
<reference key="2">
    <citation type="journal article" date="1989" name="J. Virol.">
        <title>Proteaselike sequence in hepatitis B virus core antigen is not required for e antigen generation and may not be part of an aspartic acid-type protease.</title>
        <authorList>
            <person name="Nassal M."/>
            <person name="Galle P.R."/>
            <person name="Schaller H."/>
        </authorList>
    </citation>
    <scope>CLEAVAGE BY HOST</scope>
</reference>
<reference key="3">
    <citation type="journal article" date="1989" name="J. Virol.">
        <title>Transport of hepatitis B virus precore protein into the nucleus after cleavage of its signal peptide.</title>
        <authorList>
            <person name="Ou J.H."/>
            <person name="Yeh C.T."/>
            <person name="Yen T.S."/>
        </authorList>
    </citation>
    <scope>SUBCELLULAR LOCATION</scope>
</reference>
<reference key="4">
    <citation type="journal article" date="1999" name="J. Virol.">
        <title>Subtype-independent immature secretion and subtype-dependent replication deficiency of a highly frequent, naturally occurring mutation of human hepatitis B virus core antigen.</title>
        <authorList>
            <person name="Yuan T.T."/>
            <person name="Tai P.C."/>
            <person name="Shih C."/>
        </authorList>
    </citation>
    <scope>VARIANT LEU-126</scope>
</reference>